<reference key="1">
    <citation type="journal article" date="2004" name="Nat. Biotechnol.">
        <title>The genome sequence of the capnophilic rumen bacterium Mannheimia succiniciproducens.</title>
        <authorList>
            <person name="Hong S.H."/>
            <person name="Kim J.S."/>
            <person name="Lee S.Y."/>
            <person name="In Y.H."/>
            <person name="Choi S.S."/>
            <person name="Rih J.-K."/>
            <person name="Kim C.H."/>
            <person name="Jeong H."/>
            <person name="Hur C.G."/>
            <person name="Kim J.J."/>
        </authorList>
    </citation>
    <scope>NUCLEOTIDE SEQUENCE [LARGE SCALE GENOMIC DNA]</scope>
    <source>
        <strain>KCTC 0769BP / MBEL55E</strain>
    </source>
</reference>
<name>Y934_MANSM</name>
<protein>
    <recommendedName>
        <fullName evidence="1">UPF0434 protein MS0934</fullName>
    </recommendedName>
</protein>
<comment type="similarity">
    <text evidence="1">Belongs to the UPF0434 family.</text>
</comment>
<proteinExistence type="inferred from homology"/>
<feature type="chain" id="PRO_0000291108" description="UPF0434 protein MS0934">
    <location>
        <begin position="1"/>
        <end position="61"/>
    </location>
</feature>
<gene>
    <name type="ordered locus">MS0934</name>
</gene>
<dbReference type="EMBL" id="AE016827">
    <property type="protein sequence ID" value="AAU37541.1"/>
    <property type="molecule type" value="Genomic_DNA"/>
</dbReference>
<dbReference type="RefSeq" id="WP_011200111.1">
    <property type="nucleotide sequence ID" value="NC_006300.1"/>
</dbReference>
<dbReference type="SMR" id="Q65U19"/>
<dbReference type="STRING" id="221988.MS0934"/>
<dbReference type="KEGG" id="msu:MS0934"/>
<dbReference type="eggNOG" id="COG2835">
    <property type="taxonomic scope" value="Bacteria"/>
</dbReference>
<dbReference type="HOGENOM" id="CLU_155659_3_1_6"/>
<dbReference type="OrthoDB" id="9812205at2"/>
<dbReference type="Proteomes" id="UP000000607">
    <property type="component" value="Chromosome"/>
</dbReference>
<dbReference type="GO" id="GO:0005829">
    <property type="term" value="C:cytosol"/>
    <property type="evidence" value="ECO:0007669"/>
    <property type="project" value="TreeGrafter"/>
</dbReference>
<dbReference type="Gene3D" id="2.20.25.10">
    <property type="match status" value="1"/>
</dbReference>
<dbReference type="HAMAP" id="MF_01187">
    <property type="entry name" value="UPF0434"/>
    <property type="match status" value="1"/>
</dbReference>
<dbReference type="InterPro" id="IPR005651">
    <property type="entry name" value="Trm112-like"/>
</dbReference>
<dbReference type="PANTHER" id="PTHR33505:SF4">
    <property type="entry name" value="PROTEIN PREY, MITOCHONDRIAL"/>
    <property type="match status" value="1"/>
</dbReference>
<dbReference type="PANTHER" id="PTHR33505">
    <property type="entry name" value="ZGC:162634"/>
    <property type="match status" value="1"/>
</dbReference>
<dbReference type="Pfam" id="PF03966">
    <property type="entry name" value="Trm112p"/>
    <property type="match status" value="1"/>
</dbReference>
<dbReference type="SUPFAM" id="SSF158997">
    <property type="entry name" value="Trm112p-like"/>
    <property type="match status" value="1"/>
</dbReference>
<evidence type="ECO:0000255" key="1">
    <source>
        <dbReference type="HAMAP-Rule" id="MF_01187"/>
    </source>
</evidence>
<sequence>MDSRLLEIIACPRCQGRLQLDKENERLICRFEHIAFPIVQGIPVLLVEEAVSLAEDPKDIT</sequence>
<organism>
    <name type="scientific">Mannheimia succiniciproducens (strain KCTC 0769BP / MBEL55E)</name>
    <dbReference type="NCBI Taxonomy" id="221988"/>
    <lineage>
        <taxon>Bacteria</taxon>
        <taxon>Pseudomonadati</taxon>
        <taxon>Pseudomonadota</taxon>
        <taxon>Gammaproteobacteria</taxon>
        <taxon>Pasteurellales</taxon>
        <taxon>Pasteurellaceae</taxon>
        <taxon>Basfia</taxon>
    </lineage>
</organism>
<accession>Q65U19</accession>